<accession>C0QSL9</accession>
<dbReference type="EC" id="3.4.11.1" evidence="1"/>
<dbReference type="EC" id="3.4.11.10" evidence="1"/>
<dbReference type="EMBL" id="CP001230">
    <property type="protein sequence ID" value="ACO03203.1"/>
    <property type="molecule type" value="Genomic_DNA"/>
</dbReference>
<dbReference type="RefSeq" id="WP_012675442.1">
    <property type="nucleotide sequence ID" value="NC_012440.1"/>
</dbReference>
<dbReference type="SMR" id="C0QSL9"/>
<dbReference type="STRING" id="123214.PERMA_1904"/>
<dbReference type="MEROPS" id="M17.016"/>
<dbReference type="PaxDb" id="123214-PERMA_1904"/>
<dbReference type="KEGG" id="pmx:PERMA_1904"/>
<dbReference type="eggNOG" id="COG0260">
    <property type="taxonomic scope" value="Bacteria"/>
</dbReference>
<dbReference type="HOGENOM" id="CLU_013734_2_2_0"/>
<dbReference type="OrthoDB" id="9809354at2"/>
<dbReference type="Proteomes" id="UP000001366">
    <property type="component" value="Chromosome"/>
</dbReference>
<dbReference type="GO" id="GO:0005737">
    <property type="term" value="C:cytoplasm"/>
    <property type="evidence" value="ECO:0007669"/>
    <property type="project" value="UniProtKB-SubCell"/>
</dbReference>
<dbReference type="GO" id="GO:0030145">
    <property type="term" value="F:manganese ion binding"/>
    <property type="evidence" value="ECO:0007669"/>
    <property type="project" value="UniProtKB-UniRule"/>
</dbReference>
<dbReference type="GO" id="GO:0070006">
    <property type="term" value="F:metalloaminopeptidase activity"/>
    <property type="evidence" value="ECO:0007669"/>
    <property type="project" value="InterPro"/>
</dbReference>
<dbReference type="GO" id="GO:0006508">
    <property type="term" value="P:proteolysis"/>
    <property type="evidence" value="ECO:0007669"/>
    <property type="project" value="UniProtKB-KW"/>
</dbReference>
<dbReference type="CDD" id="cd00433">
    <property type="entry name" value="Peptidase_M17"/>
    <property type="match status" value="1"/>
</dbReference>
<dbReference type="Gene3D" id="3.40.220.10">
    <property type="entry name" value="Leucine Aminopeptidase, subunit E, domain 1"/>
    <property type="match status" value="1"/>
</dbReference>
<dbReference type="Gene3D" id="3.40.630.10">
    <property type="entry name" value="Zn peptidases"/>
    <property type="match status" value="1"/>
</dbReference>
<dbReference type="HAMAP" id="MF_00181">
    <property type="entry name" value="Cytosol_peptidase_M17"/>
    <property type="match status" value="1"/>
</dbReference>
<dbReference type="InterPro" id="IPR011356">
    <property type="entry name" value="Leucine_aapep/pepB"/>
</dbReference>
<dbReference type="InterPro" id="IPR043472">
    <property type="entry name" value="Macro_dom-like"/>
</dbReference>
<dbReference type="InterPro" id="IPR000819">
    <property type="entry name" value="Peptidase_M17_C"/>
</dbReference>
<dbReference type="InterPro" id="IPR023042">
    <property type="entry name" value="Peptidase_M17_leu_NH2_pept"/>
</dbReference>
<dbReference type="InterPro" id="IPR008283">
    <property type="entry name" value="Peptidase_M17_N"/>
</dbReference>
<dbReference type="NCBIfam" id="NF002073">
    <property type="entry name" value="PRK00913.1-2"/>
    <property type="match status" value="1"/>
</dbReference>
<dbReference type="NCBIfam" id="NF002074">
    <property type="entry name" value="PRK00913.1-4"/>
    <property type="match status" value="1"/>
</dbReference>
<dbReference type="NCBIfam" id="NF002081">
    <property type="entry name" value="PRK00913.3-3"/>
    <property type="match status" value="1"/>
</dbReference>
<dbReference type="NCBIfam" id="NF002083">
    <property type="entry name" value="PRK00913.3-5"/>
    <property type="match status" value="1"/>
</dbReference>
<dbReference type="PANTHER" id="PTHR11963:SF23">
    <property type="entry name" value="CYTOSOL AMINOPEPTIDASE"/>
    <property type="match status" value="1"/>
</dbReference>
<dbReference type="PANTHER" id="PTHR11963">
    <property type="entry name" value="LEUCINE AMINOPEPTIDASE-RELATED"/>
    <property type="match status" value="1"/>
</dbReference>
<dbReference type="Pfam" id="PF00883">
    <property type="entry name" value="Peptidase_M17"/>
    <property type="match status" value="1"/>
</dbReference>
<dbReference type="Pfam" id="PF02789">
    <property type="entry name" value="Peptidase_M17_N"/>
    <property type="match status" value="1"/>
</dbReference>
<dbReference type="PRINTS" id="PR00481">
    <property type="entry name" value="LAMNOPPTDASE"/>
</dbReference>
<dbReference type="SUPFAM" id="SSF52949">
    <property type="entry name" value="Macro domain-like"/>
    <property type="match status" value="1"/>
</dbReference>
<dbReference type="SUPFAM" id="SSF53187">
    <property type="entry name" value="Zn-dependent exopeptidases"/>
    <property type="match status" value="1"/>
</dbReference>
<dbReference type="PROSITE" id="PS00631">
    <property type="entry name" value="CYTOSOL_AP"/>
    <property type="match status" value="1"/>
</dbReference>
<evidence type="ECO:0000255" key="1">
    <source>
        <dbReference type="HAMAP-Rule" id="MF_00181"/>
    </source>
</evidence>
<proteinExistence type="inferred from homology"/>
<feature type="chain" id="PRO_1000192718" description="Probable cytosol aminopeptidase">
    <location>
        <begin position="1"/>
        <end position="497"/>
    </location>
</feature>
<feature type="active site" evidence="1">
    <location>
        <position position="276"/>
    </location>
</feature>
<feature type="active site" evidence="1">
    <location>
        <position position="350"/>
    </location>
</feature>
<feature type="binding site" evidence="1">
    <location>
        <position position="264"/>
    </location>
    <ligand>
        <name>Mn(2+)</name>
        <dbReference type="ChEBI" id="CHEBI:29035"/>
        <label>2</label>
    </ligand>
</feature>
<feature type="binding site" evidence="1">
    <location>
        <position position="269"/>
    </location>
    <ligand>
        <name>Mn(2+)</name>
        <dbReference type="ChEBI" id="CHEBI:29035"/>
        <label>1</label>
    </ligand>
</feature>
<feature type="binding site" evidence="1">
    <location>
        <position position="269"/>
    </location>
    <ligand>
        <name>Mn(2+)</name>
        <dbReference type="ChEBI" id="CHEBI:29035"/>
        <label>2</label>
    </ligand>
</feature>
<feature type="binding site" evidence="1">
    <location>
        <position position="287"/>
    </location>
    <ligand>
        <name>Mn(2+)</name>
        <dbReference type="ChEBI" id="CHEBI:29035"/>
        <label>2</label>
    </ligand>
</feature>
<feature type="binding site" evidence="1">
    <location>
        <position position="346"/>
    </location>
    <ligand>
        <name>Mn(2+)</name>
        <dbReference type="ChEBI" id="CHEBI:29035"/>
        <label>1</label>
    </ligand>
</feature>
<feature type="binding site" evidence="1">
    <location>
        <position position="348"/>
    </location>
    <ligand>
        <name>Mn(2+)</name>
        <dbReference type="ChEBI" id="CHEBI:29035"/>
        <label>1</label>
    </ligand>
</feature>
<feature type="binding site" evidence="1">
    <location>
        <position position="348"/>
    </location>
    <ligand>
        <name>Mn(2+)</name>
        <dbReference type="ChEBI" id="CHEBI:29035"/>
        <label>2</label>
    </ligand>
</feature>
<comment type="function">
    <text evidence="1">Presumably involved in the processing and regular turnover of intracellular proteins. Catalyzes the removal of unsubstituted N-terminal amino acids from various peptides.</text>
</comment>
<comment type="catalytic activity">
    <reaction evidence="1">
        <text>Release of an N-terminal amino acid, Xaa-|-Yaa-, in which Xaa is preferably Leu, but may be other amino acids including Pro although not Arg or Lys, and Yaa may be Pro. Amino acid amides and methyl esters are also readily hydrolyzed, but rates on arylamides are exceedingly low.</text>
        <dbReference type="EC" id="3.4.11.1"/>
    </reaction>
</comment>
<comment type="catalytic activity">
    <reaction evidence="1">
        <text>Release of an N-terminal amino acid, preferentially leucine, but not glutamic or aspartic acids.</text>
        <dbReference type="EC" id="3.4.11.10"/>
    </reaction>
</comment>
<comment type="cofactor">
    <cofactor evidence="1">
        <name>Mn(2+)</name>
        <dbReference type="ChEBI" id="CHEBI:29035"/>
    </cofactor>
    <text evidence="1">Binds 2 manganese ions per subunit.</text>
</comment>
<comment type="subcellular location">
    <subcellularLocation>
        <location evidence="1">Cytoplasm</location>
    </subcellularLocation>
</comment>
<comment type="similarity">
    <text evidence="1">Belongs to the peptidase M17 family.</text>
</comment>
<reference key="1">
    <citation type="journal article" date="2009" name="J. Bacteriol.">
        <title>Complete and draft genome sequences of six members of the Aquificales.</title>
        <authorList>
            <person name="Reysenbach A.-L."/>
            <person name="Hamamura N."/>
            <person name="Podar M."/>
            <person name="Griffiths E."/>
            <person name="Ferreira S."/>
            <person name="Hochstein R."/>
            <person name="Heidelberg J."/>
            <person name="Johnson J."/>
            <person name="Mead D."/>
            <person name="Pohorille A."/>
            <person name="Sarmiento M."/>
            <person name="Schweighofer K."/>
            <person name="Seshadri R."/>
            <person name="Voytek M.A."/>
        </authorList>
    </citation>
    <scope>NUCLEOTIDE SEQUENCE [LARGE SCALE GENOMIC DNA]</scope>
    <source>
        <strain>DSM 14350 / EX-H1</strain>
    </source>
</reference>
<name>AMPA_PERMH</name>
<keyword id="KW-0031">Aminopeptidase</keyword>
<keyword id="KW-0963">Cytoplasm</keyword>
<keyword id="KW-0378">Hydrolase</keyword>
<keyword id="KW-0464">Manganese</keyword>
<keyword id="KW-0479">Metal-binding</keyword>
<keyword id="KW-0645">Protease</keyword>
<keyword id="KW-1185">Reference proteome</keyword>
<protein>
    <recommendedName>
        <fullName evidence="1">Probable cytosol aminopeptidase</fullName>
        <ecNumber evidence="1">3.4.11.1</ecNumber>
    </recommendedName>
    <alternativeName>
        <fullName evidence="1">Leucine aminopeptidase</fullName>
        <shortName evidence="1">LAP</shortName>
        <ecNumber evidence="1">3.4.11.10</ecNumber>
    </alternativeName>
    <alternativeName>
        <fullName evidence="1">Leucyl aminopeptidase</fullName>
    </alternativeName>
</protein>
<organism>
    <name type="scientific">Persephonella marina (strain DSM 14350 / EX-H1)</name>
    <dbReference type="NCBI Taxonomy" id="123214"/>
    <lineage>
        <taxon>Bacteria</taxon>
        <taxon>Pseudomonadati</taxon>
        <taxon>Aquificota</taxon>
        <taxon>Aquificia</taxon>
        <taxon>Aquificales</taxon>
        <taxon>Hydrogenothermaceae</taxon>
        <taxon>Persephonella</taxon>
    </lineage>
</organism>
<sequence length="497" mass="55379">MNIKITSGHLKNARVRAVISFSFKEDRKLSPEIEDLDRILDGAISQLKREQKFDGSDGKILVVPTFGKGKMDYVILIGAGSRRKADLDKVRRLGNISVKTTKKLKIDRFLIDAEPLSVIKEGEDSIAQAVVEGVILGNYRFDKYLSKKDEYRIKELQIRVKRRFKNKAEQSVKVGKILAESQNFTRDIVNEPGNVITPEKLAQIAQDLAREYGFEVKIYDEEEIEKMGMNAYLAVAKGSANPPRFIHIIYRPEKPKKKIALIGKGLTFDSGGLNIKPGDYMRWMKADKSGACAVLGIFKAIGQLKPDVEVHGIIAAAENMPDGRSYRPDDIIKAKNGVTIEIGNTDAEGRLTLADALCYASELKPDAIIDMATLTGACVVALGEYTAGVMGNDERLIDQILDISKRTGEWMWPLPFNDMLREHIKAPHADVYNIGTTRYGGAITAGLFLEKFVDKKIPWVHIDIAGPAHNTKGWYYHPKGATGFPVRTITTFLLNQE</sequence>
<gene>
    <name evidence="1" type="primary">pepA</name>
    <name type="ordered locus">PERMA_1904</name>
</gene>